<protein>
    <recommendedName>
        <fullName evidence="1">NADH-quinone oxidoreductase subunit K</fullName>
        <ecNumber evidence="1">7.1.1.-</ecNumber>
    </recommendedName>
    <alternativeName>
        <fullName evidence="1">NADH dehydrogenase I subunit K</fullName>
    </alternativeName>
    <alternativeName>
        <fullName evidence="1">NDH-1 subunit K</fullName>
    </alternativeName>
</protein>
<proteinExistence type="inferred from homology"/>
<name>NUOK_CERS1</name>
<dbReference type="EC" id="7.1.1.-" evidence="1"/>
<dbReference type="EMBL" id="CP000577">
    <property type="protein sequence ID" value="ABN76298.1"/>
    <property type="molecule type" value="Genomic_DNA"/>
</dbReference>
<dbReference type="RefSeq" id="WP_002719678.1">
    <property type="nucleotide sequence ID" value="NC_009049.1"/>
</dbReference>
<dbReference type="SMR" id="A3PIY2"/>
<dbReference type="GeneID" id="67446282"/>
<dbReference type="KEGG" id="rsh:Rsph17029_1188"/>
<dbReference type="HOGENOM" id="CLU_144724_2_0_5"/>
<dbReference type="GO" id="GO:0030964">
    <property type="term" value="C:NADH dehydrogenase complex"/>
    <property type="evidence" value="ECO:0007669"/>
    <property type="project" value="TreeGrafter"/>
</dbReference>
<dbReference type="GO" id="GO:0005886">
    <property type="term" value="C:plasma membrane"/>
    <property type="evidence" value="ECO:0007669"/>
    <property type="project" value="UniProtKB-SubCell"/>
</dbReference>
<dbReference type="GO" id="GO:0050136">
    <property type="term" value="F:NADH:ubiquinone reductase (non-electrogenic) activity"/>
    <property type="evidence" value="ECO:0007669"/>
    <property type="project" value="UniProtKB-UniRule"/>
</dbReference>
<dbReference type="GO" id="GO:0048038">
    <property type="term" value="F:quinone binding"/>
    <property type="evidence" value="ECO:0007669"/>
    <property type="project" value="UniProtKB-KW"/>
</dbReference>
<dbReference type="GO" id="GO:0042773">
    <property type="term" value="P:ATP synthesis coupled electron transport"/>
    <property type="evidence" value="ECO:0007669"/>
    <property type="project" value="InterPro"/>
</dbReference>
<dbReference type="FunFam" id="1.10.287.3510:FF:000001">
    <property type="entry name" value="NADH-quinone oxidoreductase subunit K"/>
    <property type="match status" value="1"/>
</dbReference>
<dbReference type="Gene3D" id="1.10.287.3510">
    <property type="match status" value="1"/>
</dbReference>
<dbReference type="HAMAP" id="MF_01456">
    <property type="entry name" value="NDH1_NuoK"/>
    <property type="match status" value="1"/>
</dbReference>
<dbReference type="InterPro" id="IPR001133">
    <property type="entry name" value="NADH_UbQ_OxRdtase_chain4L/K"/>
</dbReference>
<dbReference type="InterPro" id="IPR039428">
    <property type="entry name" value="NUOK/Mnh_C1-like"/>
</dbReference>
<dbReference type="NCBIfam" id="NF004320">
    <property type="entry name" value="PRK05715.1-2"/>
    <property type="match status" value="1"/>
</dbReference>
<dbReference type="NCBIfam" id="NF004321">
    <property type="entry name" value="PRK05715.1-3"/>
    <property type="match status" value="1"/>
</dbReference>
<dbReference type="NCBIfam" id="NF004323">
    <property type="entry name" value="PRK05715.1-5"/>
    <property type="match status" value="1"/>
</dbReference>
<dbReference type="PANTHER" id="PTHR11434:SF21">
    <property type="entry name" value="NADH DEHYDROGENASE SUBUNIT 4L-RELATED"/>
    <property type="match status" value="1"/>
</dbReference>
<dbReference type="PANTHER" id="PTHR11434">
    <property type="entry name" value="NADH-UBIQUINONE OXIDOREDUCTASE SUBUNIT ND4L"/>
    <property type="match status" value="1"/>
</dbReference>
<dbReference type="Pfam" id="PF00420">
    <property type="entry name" value="Oxidored_q2"/>
    <property type="match status" value="1"/>
</dbReference>
<gene>
    <name evidence="1" type="primary">nuoK</name>
    <name type="ordered locus">Rsph17029_1188</name>
</gene>
<keyword id="KW-0997">Cell inner membrane</keyword>
<keyword id="KW-1003">Cell membrane</keyword>
<keyword id="KW-0472">Membrane</keyword>
<keyword id="KW-0520">NAD</keyword>
<keyword id="KW-0874">Quinone</keyword>
<keyword id="KW-1278">Translocase</keyword>
<keyword id="KW-0812">Transmembrane</keyword>
<keyword id="KW-1133">Transmembrane helix</keyword>
<keyword id="KW-0813">Transport</keyword>
<keyword id="KW-0830">Ubiquinone</keyword>
<comment type="function">
    <text evidence="1">NDH-1 shuttles electrons from NADH, via FMN and iron-sulfur (Fe-S) centers, to quinones in the respiratory chain. The immediate electron acceptor for the enzyme in this species is believed to be ubiquinone. Couples the redox reaction to proton translocation (for every two electrons transferred, four hydrogen ions are translocated across the cytoplasmic membrane), and thus conserves the redox energy in a proton gradient.</text>
</comment>
<comment type="catalytic activity">
    <reaction evidence="1">
        <text>a quinone + NADH + 5 H(+)(in) = a quinol + NAD(+) + 4 H(+)(out)</text>
        <dbReference type="Rhea" id="RHEA:57888"/>
        <dbReference type="ChEBI" id="CHEBI:15378"/>
        <dbReference type="ChEBI" id="CHEBI:24646"/>
        <dbReference type="ChEBI" id="CHEBI:57540"/>
        <dbReference type="ChEBI" id="CHEBI:57945"/>
        <dbReference type="ChEBI" id="CHEBI:132124"/>
    </reaction>
</comment>
<comment type="subunit">
    <text evidence="1">NDH-1 is composed of 14 different subunits. Subunits NuoA, H, J, K, L, M, N constitute the membrane sector of the complex.</text>
</comment>
<comment type="subcellular location">
    <subcellularLocation>
        <location evidence="1">Cell inner membrane</location>
        <topology evidence="1">Multi-pass membrane protein</topology>
    </subcellularLocation>
</comment>
<comment type="similarity">
    <text evidence="1">Belongs to the complex I subunit 4L family.</text>
</comment>
<accession>A3PIY2</accession>
<evidence type="ECO:0000255" key="1">
    <source>
        <dbReference type="HAMAP-Rule" id="MF_01456"/>
    </source>
</evidence>
<organism>
    <name type="scientific">Cereibacter sphaeroides (strain ATCC 17029 / ATH 2.4.9)</name>
    <name type="common">Rhodobacter sphaeroides</name>
    <dbReference type="NCBI Taxonomy" id="349101"/>
    <lineage>
        <taxon>Bacteria</taxon>
        <taxon>Pseudomonadati</taxon>
        <taxon>Pseudomonadota</taxon>
        <taxon>Alphaproteobacteria</taxon>
        <taxon>Rhodobacterales</taxon>
        <taxon>Paracoccaceae</taxon>
        <taxon>Cereibacter</taxon>
    </lineage>
</organism>
<reference key="1">
    <citation type="submission" date="2007-02" db="EMBL/GenBank/DDBJ databases">
        <title>Complete sequence of chromosome 1 of Rhodobacter sphaeroides ATCC 17029.</title>
        <authorList>
            <person name="Copeland A."/>
            <person name="Lucas S."/>
            <person name="Lapidus A."/>
            <person name="Barry K."/>
            <person name="Detter J.C."/>
            <person name="Glavina del Rio T."/>
            <person name="Hammon N."/>
            <person name="Israni S."/>
            <person name="Dalin E."/>
            <person name="Tice H."/>
            <person name="Pitluck S."/>
            <person name="Kiss H."/>
            <person name="Brettin T."/>
            <person name="Bruce D."/>
            <person name="Han C."/>
            <person name="Tapia R."/>
            <person name="Gilna P."/>
            <person name="Schmutz J."/>
            <person name="Larimer F."/>
            <person name="Land M."/>
            <person name="Hauser L."/>
            <person name="Kyrpides N."/>
            <person name="Mikhailova N."/>
            <person name="Richardson P."/>
            <person name="Mackenzie C."/>
            <person name="Choudhary M."/>
            <person name="Donohue T.J."/>
            <person name="Kaplan S."/>
        </authorList>
    </citation>
    <scope>NUCLEOTIDE SEQUENCE [LARGE SCALE GENOMIC DNA]</scope>
    <source>
        <strain>ATCC 17029 / ATH 2.4.9</strain>
    </source>
</reference>
<sequence length="101" mass="10872">MVGLEHYLTVSAALLVIGIFGIFLNRKNVIVILMSIELMLLAVNINLVAFSSFLGDLTGQVFTLFVLTVAAAEAAIGLAILVTFFRNRGTIDVEDVNVMKG</sequence>
<feature type="chain" id="PRO_0000390201" description="NADH-quinone oxidoreductase subunit K">
    <location>
        <begin position="1"/>
        <end position="101"/>
    </location>
</feature>
<feature type="transmembrane region" description="Helical" evidence="1">
    <location>
        <begin position="4"/>
        <end position="24"/>
    </location>
</feature>
<feature type="transmembrane region" description="Helical" evidence="1">
    <location>
        <begin position="30"/>
        <end position="50"/>
    </location>
</feature>
<feature type="transmembrane region" description="Helical" evidence="1">
    <location>
        <begin position="65"/>
        <end position="85"/>
    </location>
</feature>